<reference key="1">
    <citation type="submission" date="2005-11" db="EMBL/GenBank/DDBJ databases">
        <authorList>
            <consortium name="NIH - Mammalian Gene Collection (MGC) project"/>
        </authorList>
    </citation>
    <scope>NUCLEOTIDE SEQUENCE [LARGE SCALE MRNA]</scope>
    <source>
        <strain>Crossbred X Angus</strain>
        <tissue>Liver</tissue>
    </source>
</reference>
<protein>
    <recommendedName>
        <fullName>6-phosphogluconolactonase</fullName>
        <shortName>6PGL</shortName>
        <ecNumber>3.1.1.31</ecNumber>
    </recommendedName>
</protein>
<sequence>MAAPAPRLISVFSSPQELGASLAQLVVQQAACCLADAGARFTLGLSGGSLVSMLARELPAAAAPAGPASLARWTLGFCDERLVPFEHAESTYGLYRTHLLSKLPIFDSQVITINPALPVEEAAEDYAKKLRQAFQGDSIPVFDLLILGVGPDGHTCSLFPDHPLLQEREKIVAPISDSPKPPPQRVTLTLPVLNAARTVIYVATGEGKAAILKRILEDKEENPLPAALVQPSAGKLCWFLDEAAARLLTVPFEKHSTL</sequence>
<proteinExistence type="evidence at transcript level"/>
<comment type="function">
    <text evidence="1">Hydrolysis of 6-phosphogluconolactone to 6-phosphogluconate.</text>
</comment>
<comment type="catalytic activity">
    <reaction>
        <text>6-phospho-D-glucono-1,5-lactone + H2O = 6-phospho-D-gluconate + H(+)</text>
        <dbReference type="Rhea" id="RHEA:12556"/>
        <dbReference type="ChEBI" id="CHEBI:15377"/>
        <dbReference type="ChEBI" id="CHEBI:15378"/>
        <dbReference type="ChEBI" id="CHEBI:57955"/>
        <dbReference type="ChEBI" id="CHEBI:58759"/>
        <dbReference type="EC" id="3.1.1.31"/>
    </reaction>
</comment>
<comment type="pathway">
    <text>Carbohydrate degradation; pentose phosphate pathway; D-ribulose 5-phosphate from D-glucose 6-phosphate (oxidative stage): step 2/3.</text>
</comment>
<comment type="subcellular location">
    <subcellularLocation>
        <location evidence="1">Cytoplasm</location>
    </subcellularLocation>
</comment>
<comment type="similarity">
    <text evidence="3">Belongs to the glucosamine/galactosamine-6-phosphate isomerase family. 6-phosphogluconolactonase subfamily.</text>
</comment>
<keyword id="KW-0007">Acetylation</keyword>
<keyword id="KW-0963">Cytoplasm</keyword>
<keyword id="KW-0378">Hydrolase</keyword>
<keyword id="KW-0597">Phosphoprotein</keyword>
<keyword id="KW-1185">Reference proteome</keyword>
<organism>
    <name type="scientific">Bos taurus</name>
    <name type="common">Bovine</name>
    <dbReference type="NCBI Taxonomy" id="9913"/>
    <lineage>
        <taxon>Eukaryota</taxon>
        <taxon>Metazoa</taxon>
        <taxon>Chordata</taxon>
        <taxon>Craniata</taxon>
        <taxon>Vertebrata</taxon>
        <taxon>Euteleostomi</taxon>
        <taxon>Mammalia</taxon>
        <taxon>Eutheria</taxon>
        <taxon>Laurasiatheria</taxon>
        <taxon>Artiodactyla</taxon>
        <taxon>Ruminantia</taxon>
        <taxon>Pecora</taxon>
        <taxon>Bovidae</taxon>
        <taxon>Bovinae</taxon>
        <taxon>Bos</taxon>
    </lineage>
</organism>
<accession>Q2TBQ8</accession>
<gene>
    <name type="primary">PGLS</name>
</gene>
<dbReference type="EC" id="3.1.1.31"/>
<dbReference type="EMBL" id="BC109789">
    <property type="protein sequence ID" value="AAI09790.1"/>
    <property type="molecule type" value="mRNA"/>
</dbReference>
<dbReference type="RefSeq" id="NP_001033669.1">
    <property type="nucleotide sequence ID" value="NM_001038580.1"/>
</dbReference>
<dbReference type="SMR" id="Q2TBQ8"/>
<dbReference type="FunCoup" id="Q2TBQ8">
    <property type="interactions" value="2308"/>
</dbReference>
<dbReference type="STRING" id="9913.ENSBTAP00000022314"/>
<dbReference type="PaxDb" id="9913-ENSBTAP00000022314"/>
<dbReference type="PeptideAtlas" id="Q2TBQ8"/>
<dbReference type="GeneID" id="616120"/>
<dbReference type="KEGG" id="bta:616120"/>
<dbReference type="CTD" id="25796"/>
<dbReference type="eggNOG" id="KOG3147">
    <property type="taxonomic scope" value="Eukaryota"/>
</dbReference>
<dbReference type="InParanoid" id="Q2TBQ8"/>
<dbReference type="OrthoDB" id="432544at2759"/>
<dbReference type="SABIO-RK" id="Q2TBQ8"/>
<dbReference type="UniPathway" id="UPA00115">
    <property type="reaction ID" value="UER00409"/>
</dbReference>
<dbReference type="Proteomes" id="UP000009136">
    <property type="component" value="Unplaced"/>
</dbReference>
<dbReference type="GO" id="GO:0005829">
    <property type="term" value="C:cytosol"/>
    <property type="evidence" value="ECO:0000318"/>
    <property type="project" value="GO_Central"/>
</dbReference>
<dbReference type="GO" id="GO:0017057">
    <property type="term" value="F:6-phosphogluconolactonase activity"/>
    <property type="evidence" value="ECO:0000318"/>
    <property type="project" value="GO_Central"/>
</dbReference>
<dbReference type="GO" id="GO:0005975">
    <property type="term" value="P:carbohydrate metabolic process"/>
    <property type="evidence" value="ECO:0007669"/>
    <property type="project" value="InterPro"/>
</dbReference>
<dbReference type="GO" id="GO:0009051">
    <property type="term" value="P:pentose-phosphate shunt, oxidative branch"/>
    <property type="evidence" value="ECO:0000318"/>
    <property type="project" value="GO_Central"/>
</dbReference>
<dbReference type="CDD" id="cd01400">
    <property type="entry name" value="6PGL"/>
    <property type="match status" value="1"/>
</dbReference>
<dbReference type="FunFam" id="3.40.50.1360:FF:000005">
    <property type="entry name" value="6-phosphogluconolactonase"/>
    <property type="match status" value="1"/>
</dbReference>
<dbReference type="Gene3D" id="3.40.50.1360">
    <property type="match status" value="1"/>
</dbReference>
<dbReference type="InterPro" id="IPR005900">
    <property type="entry name" value="6-phosphogluconolactonase_DevB"/>
</dbReference>
<dbReference type="InterPro" id="IPR006148">
    <property type="entry name" value="Glc/Gal-6P_isomerase"/>
</dbReference>
<dbReference type="InterPro" id="IPR037171">
    <property type="entry name" value="NagB/RpiA_transferase-like"/>
</dbReference>
<dbReference type="InterPro" id="IPR039104">
    <property type="entry name" value="PGLS"/>
</dbReference>
<dbReference type="NCBIfam" id="TIGR01198">
    <property type="entry name" value="pgl"/>
    <property type="match status" value="1"/>
</dbReference>
<dbReference type="PANTHER" id="PTHR11054">
    <property type="entry name" value="6-PHOSPHOGLUCONOLACTONASE"/>
    <property type="match status" value="1"/>
</dbReference>
<dbReference type="PANTHER" id="PTHR11054:SF0">
    <property type="entry name" value="6-PHOSPHOGLUCONOLACTONASE"/>
    <property type="match status" value="1"/>
</dbReference>
<dbReference type="Pfam" id="PF01182">
    <property type="entry name" value="Glucosamine_iso"/>
    <property type="match status" value="1"/>
</dbReference>
<dbReference type="SUPFAM" id="SSF100950">
    <property type="entry name" value="NagB/RpiA/CoA transferase-like"/>
    <property type="match status" value="1"/>
</dbReference>
<name>6PGL_BOVIN</name>
<evidence type="ECO:0000250" key="1"/>
<evidence type="ECO:0000250" key="2">
    <source>
        <dbReference type="UniProtKB" id="O95336"/>
    </source>
</evidence>
<evidence type="ECO:0000305" key="3"/>
<feature type="initiator methionine" description="Removed" evidence="2">
    <location>
        <position position="1"/>
    </location>
</feature>
<feature type="chain" id="PRO_0000288666" description="6-phosphogluconolactonase">
    <location>
        <begin position="2"/>
        <end position="258"/>
    </location>
</feature>
<feature type="modified residue" description="N-acetylalanine" evidence="2">
    <location>
        <position position="2"/>
    </location>
</feature>
<feature type="modified residue" description="Phosphoserine" evidence="2">
    <location>
        <position position="49"/>
    </location>
</feature>
<feature type="modified residue" description="N6-acetyllysine" evidence="2">
    <location>
        <position position="180"/>
    </location>
</feature>